<feature type="chain" id="PRO_1000197344" description="Spermidine export protein MdtJ">
    <location>
        <begin position="1"/>
        <end position="147"/>
    </location>
</feature>
<feature type="transmembrane region" description="Helical" evidence="1">
    <location>
        <begin position="1"/>
        <end position="21"/>
    </location>
</feature>
<feature type="transmembrane region" description="Helical" evidence="1">
    <location>
        <begin position="31"/>
        <end position="51"/>
    </location>
</feature>
<feature type="transmembrane region" description="Helical" evidence="1">
    <location>
        <begin position="54"/>
        <end position="74"/>
    </location>
</feature>
<feature type="transmembrane region" description="Helical" evidence="1">
    <location>
        <begin position="81"/>
        <end position="101"/>
    </location>
</feature>
<feature type="region of interest" description="Disordered" evidence="2">
    <location>
        <begin position="105"/>
        <end position="147"/>
    </location>
</feature>
<feature type="compositionally biased region" description="Basic residues" evidence="2">
    <location>
        <begin position="105"/>
        <end position="117"/>
    </location>
</feature>
<organism>
    <name type="scientific">Yersinia pseudotuberculosis serotype IB (strain PB1/+)</name>
    <dbReference type="NCBI Taxonomy" id="502801"/>
    <lineage>
        <taxon>Bacteria</taxon>
        <taxon>Pseudomonadati</taxon>
        <taxon>Pseudomonadota</taxon>
        <taxon>Gammaproteobacteria</taxon>
        <taxon>Enterobacterales</taxon>
        <taxon>Yersiniaceae</taxon>
        <taxon>Yersinia</taxon>
    </lineage>
</organism>
<reference key="1">
    <citation type="submission" date="2008-04" db="EMBL/GenBank/DDBJ databases">
        <title>Complete sequence of Yersinia pseudotuberculosis PB1/+.</title>
        <authorList>
            <person name="Copeland A."/>
            <person name="Lucas S."/>
            <person name="Lapidus A."/>
            <person name="Glavina del Rio T."/>
            <person name="Dalin E."/>
            <person name="Tice H."/>
            <person name="Bruce D."/>
            <person name="Goodwin L."/>
            <person name="Pitluck S."/>
            <person name="Munk A.C."/>
            <person name="Brettin T."/>
            <person name="Detter J.C."/>
            <person name="Han C."/>
            <person name="Tapia R."/>
            <person name="Schmutz J."/>
            <person name="Larimer F."/>
            <person name="Land M."/>
            <person name="Hauser L."/>
            <person name="Challacombe J.F."/>
            <person name="Green L."/>
            <person name="Lindler L.E."/>
            <person name="Nikolich M.P."/>
            <person name="Richardson P."/>
        </authorList>
    </citation>
    <scope>NUCLEOTIDE SEQUENCE [LARGE SCALE GENOMIC DNA]</scope>
    <source>
        <strain>PB1/+</strain>
    </source>
</reference>
<sequence length="147" mass="15819">MIYWIFLGLAIIAEIIGTLSMKYASVSGEMTGHVVMYFMITGSYVMLSLAVKKVALGVAYALWEGIGILIITIFSVMWFGETLSPLKIAGLVTLIGGILLVKSGTRKPKQPNRHRGNRPPSVQGLKTQTTGHHKGVAVESGEHHAAA</sequence>
<protein>
    <recommendedName>
        <fullName evidence="1">Spermidine export protein MdtJ</fullName>
    </recommendedName>
</protein>
<gene>
    <name evidence="1" type="primary">mdtJ</name>
    <name type="ordered locus">YPTS_2112</name>
</gene>
<accession>B2K336</accession>
<dbReference type="EMBL" id="CP001048">
    <property type="protein sequence ID" value="ACC89075.1"/>
    <property type="molecule type" value="Genomic_DNA"/>
</dbReference>
<dbReference type="RefSeq" id="WP_012413719.1">
    <property type="nucleotide sequence ID" value="NZ_CP009780.1"/>
</dbReference>
<dbReference type="SMR" id="B2K336"/>
<dbReference type="GeneID" id="49785958"/>
<dbReference type="KEGG" id="ypb:YPTS_2112"/>
<dbReference type="PATRIC" id="fig|502801.10.peg.1502"/>
<dbReference type="GO" id="GO:0005886">
    <property type="term" value="C:plasma membrane"/>
    <property type="evidence" value="ECO:0007669"/>
    <property type="project" value="UniProtKB-SubCell"/>
</dbReference>
<dbReference type="GO" id="GO:0015199">
    <property type="term" value="F:amino-acid betaine transmembrane transporter activity"/>
    <property type="evidence" value="ECO:0007669"/>
    <property type="project" value="TreeGrafter"/>
</dbReference>
<dbReference type="GO" id="GO:0015297">
    <property type="term" value="F:antiporter activity"/>
    <property type="evidence" value="ECO:0007669"/>
    <property type="project" value="TreeGrafter"/>
</dbReference>
<dbReference type="GO" id="GO:0015220">
    <property type="term" value="F:choline transmembrane transporter activity"/>
    <property type="evidence" value="ECO:0007669"/>
    <property type="project" value="TreeGrafter"/>
</dbReference>
<dbReference type="GO" id="GO:0015606">
    <property type="term" value="F:spermidine transmembrane transporter activity"/>
    <property type="evidence" value="ECO:0007669"/>
    <property type="project" value="UniProtKB-UniRule"/>
</dbReference>
<dbReference type="GO" id="GO:0031460">
    <property type="term" value="P:glycine betaine transport"/>
    <property type="evidence" value="ECO:0007669"/>
    <property type="project" value="TreeGrafter"/>
</dbReference>
<dbReference type="FunFam" id="1.10.3730.20:FF:000001">
    <property type="entry name" value="Quaternary ammonium compound resistance transporter SugE"/>
    <property type="match status" value="1"/>
</dbReference>
<dbReference type="Gene3D" id="1.10.3730.20">
    <property type="match status" value="1"/>
</dbReference>
<dbReference type="HAMAP" id="MF_01598">
    <property type="entry name" value="MdtJ"/>
    <property type="match status" value="1"/>
</dbReference>
<dbReference type="InterPro" id="IPR000390">
    <property type="entry name" value="Small_drug/metabolite_transptr"/>
</dbReference>
<dbReference type="InterPro" id="IPR045324">
    <property type="entry name" value="Small_multidrug_res"/>
</dbReference>
<dbReference type="InterPro" id="IPR023740">
    <property type="entry name" value="Spermidine_export_MdtJ"/>
</dbReference>
<dbReference type="NCBIfam" id="NF007767">
    <property type="entry name" value="PRK10452.1"/>
    <property type="match status" value="1"/>
</dbReference>
<dbReference type="PANTHER" id="PTHR30561">
    <property type="entry name" value="SMR FAMILY PROTON-DEPENDENT DRUG EFFLUX TRANSPORTER SUGE"/>
    <property type="match status" value="1"/>
</dbReference>
<dbReference type="PANTHER" id="PTHR30561:SF2">
    <property type="entry name" value="SPERMIDINE EXPORT PROTEIN MDTJ"/>
    <property type="match status" value="1"/>
</dbReference>
<dbReference type="Pfam" id="PF00893">
    <property type="entry name" value="Multi_Drug_Res"/>
    <property type="match status" value="1"/>
</dbReference>
<dbReference type="SUPFAM" id="SSF103481">
    <property type="entry name" value="Multidrug resistance efflux transporter EmrE"/>
    <property type="match status" value="1"/>
</dbReference>
<evidence type="ECO:0000255" key="1">
    <source>
        <dbReference type="HAMAP-Rule" id="MF_01598"/>
    </source>
</evidence>
<evidence type="ECO:0000256" key="2">
    <source>
        <dbReference type="SAM" id="MobiDB-lite"/>
    </source>
</evidence>
<name>MDTJ_YERPB</name>
<comment type="function">
    <text evidence="1">Catalyzes the excretion of spermidine.</text>
</comment>
<comment type="subunit">
    <text evidence="1">Forms a complex with MdtI.</text>
</comment>
<comment type="subcellular location">
    <subcellularLocation>
        <location evidence="1">Cell inner membrane</location>
        <topology evidence="1">Multi-pass membrane protein</topology>
    </subcellularLocation>
</comment>
<comment type="similarity">
    <text evidence="1">Belongs to the drug/metabolite transporter (DMT) superfamily. Small multidrug resistance (SMR) (TC 2.A.7.1) family. MdtJ subfamily.</text>
</comment>
<proteinExistence type="inferred from homology"/>
<keyword id="KW-0997">Cell inner membrane</keyword>
<keyword id="KW-1003">Cell membrane</keyword>
<keyword id="KW-0472">Membrane</keyword>
<keyword id="KW-0812">Transmembrane</keyword>
<keyword id="KW-1133">Transmembrane helix</keyword>
<keyword id="KW-0813">Transport</keyword>